<dbReference type="EMBL" id="AB085593">
    <property type="protein sequence ID" value="BAB92976.1"/>
    <property type="molecule type" value="mRNA"/>
</dbReference>
<dbReference type="RefSeq" id="XP_005227339.1">
    <property type="nucleotide sequence ID" value="XM_005227282.2"/>
</dbReference>
<dbReference type="BMRB" id="Q8MKI3"/>
<dbReference type="SMR" id="Q8MKI3"/>
<dbReference type="FunCoup" id="Q8MKI3">
    <property type="interactions" value="70"/>
</dbReference>
<dbReference type="STRING" id="9913.ENSBTAP00000054396"/>
<dbReference type="PaxDb" id="9913-ENSBTAP00000054396"/>
<dbReference type="GeneID" id="282096"/>
<dbReference type="CTD" id="7140"/>
<dbReference type="eggNOG" id="KOG3634">
    <property type="taxonomic scope" value="Eukaryota"/>
</dbReference>
<dbReference type="HOGENOM" id="CLU_076377_1_0_1"/>
<dbReference type="InParanoid" id="Q8MKI3"/>
<dbReference type="TreeFam" id="TF313321"/>
<dbReference type="Proteomes" id="UP000009136">
    <property type="component" value="Unplaced"/>
</dbReference>
<dbReference type="GO" id="GO:0005861">
    <property type="term" value="C:troponin complex"/>
    <property type="evidence" value="ECO:0000318"/>
    <property type="project" value="GO_Central"/>
</dbReference>
<dbReference type="GO" id="GO:0005523">
    <property type="term" value="F:tropomyosin binding"/>
    <property type="evidence" value="ECO:0000318"/>
    <property type="project" value="GO_Central"/>
</dbReference>
<dbReference type="GO" id="GO:0030172">
    <property type="term" value="F:troponin C binding"/>
    <property type="evidence" value="ECO:0000318"/>
    <property type="project" value="GO_Central"/>
</dbReference>
<dbReference type="GO" id="GO:0031013">
    <property type="term" value="F:troponin I binding"/>
    <property type="evidence" value="ECO:0000318"/>
    <property type="project" value="GO_Central"/>
</dbReference>
<dbReference type="GO" id="GO:0006937">
    <property type="term" value="P:regulation of muscle contraction"/>
    <property type="evidence" value="ECO:0007669"/>
    <property type="project" value="InterPro"/>
</dbReference>
<dbReference type="GO" id="GO:0003009">
    <property type="term" value="P:skeletal muscle contraction"/>
    <property type="evidence" value="ECO:0000318"/>
    <property type="project" value="GO_Central"/>
</dbReference>
<dbReference type="FunFam" id="1.20.5.350:FF:000001">
    <property type="entry name" value="Troponin T, fast skeletal muscle"/>
    <property type="match status" value="1"/>
</dbReference>
<dbReference type="Gene3D" id="1.20.5.350">
    <property type="match status" value="1"/>
</dbReference>
<dbReference type="InterPro" id="IPR027707">
    <property type="entry name" value="TNNT"/>
</dbReference>
<dbReference type="InterPro" id="IPR001978">
    <property type="entry name" value="Troponin"/>
</dbReference>
<dbReference type="InterPro" id="IPR038077">
    <property type="entry name" value="Troponin_sf"/>
</dbReference>
<dbReference type="PANTHER" id="PTHR11521">
    <property type="entry name" value="TROPONIN T"/>
    <property type="match status" value="1"/>
</dbReference>
<dbReference type="PANTHER" id="PTHR11521:SF4">
    <property type="entry name" value="TROPONIN T, FAST SKELETAL MUSCLE"/>
    <property type="match status" value="1"/>
</dbReference>
<dbReference type="Pfam" id="PF00992">
    <property type="entry name" value="Troponin"/>
    <property type="match status" value="1"/>
</dbReference>
<dbReference type="SUPFAM" id="SSF90250">
    <property type="entry name" value="Troponin coil-coiled subunits"/>
    <property type="match status" value="1"/>
</dbReference>
<accession>Q8MKI3</accession>
<gene>
    <name type="primary">Tnnt3</name>
</gene>
<proteinExistence type="evidence at transcript level"/>
<keyword id="KW-0007">Acetylation</keyword>
<keyword id="KW-0514">Muscle protein</keyword>
<keyword id="KW-0597">Phosphoprotein</keyword>
<keyword id="KW-1185">Reference proteome</keyword>
<organism>
    <name type="scientific">Bos taurus</name>
    <name type="common">Bovine</name>
    <dbReference type="NCBI Taxonomy" id="9913"/>
    <lineage>
        <taxon>Eukaryota</taxon>
        <taxon>Metazoa</taxon>
        <taxon>Chordata</taxon>
        <taxon>Craniata</taxon>
        <taxon>Vertebrata</taxon>
        <taxon>Euteleostomi</taxon>
        <taxon>Mammalia</taxon>
        <taxon>Eutheria</taxon>
        <taxon>Laurasiatheria</taxon>
        <taxon>Artiodactyla</taxon>
        <taxon>Ruminantia</taxon>
        <taxon>Pecora</taxon>
        <taxon>Bovidae</taxon>
        <taxon>Bovinae</taxon>
        <taxon>Bos</taxon>
    </lineage>
</organism>
<evidence type="ECO:0000250" key="1"/>
<evidence type="ECO:0000250" key="2">
    <source>
        <dbReference type="UniProtKB" id="P02641"/>
    </source>
</evidence>
<evidence type="ECO:0000250" key="3">
    <source>
        <dbReference type="UniProtKB" id="P09739"/>
    </source>
</evidence>
<evidence type="ECO:0000250" key="4">
    <source>
        <dbReference type="UniProtKB" id="Q9QZ47"/>
    </source>
</evidence>
<evidence type="ECO:0000256" key="5">
    <source>
        <dbReference type="SAM" id="MobiDB-lite"/>
    </source>
</evidence>
<evidence type="ECO:0000305" key="6"/>
<name>TNNT3_BOVIN</name>
<comment type="function">
    <text evidence="1">Troponin T is the tropomyosin-binding subunit of troponin, the thin filament regulatory complex which confers calcium-sensitivity to striated muscle actomyosin ATPase activity.</text>
</comment>
<comment type="similarity">
    <text evidence="6">Belongs to the troponin T family.</text>
</comment>
<protein>
    <recommendedName>
        <fullName>Troponin T, fast skeletal muscle</fullName>
        <shortName>TnTf</shortName>
    </recommendedName>
</protein>
<reference key="1">
    <citation type="journal article" date="2003" name="J. Anim. Sci.">
        <title>Amino acid sequences of multiple fast and slow troponin T isoforms expressed in adult bovine skeletal muscles.</title>
        <authorList>
            <person name="Muroya S."/>
            <person name="Nakajima I."/>
            <person name="Chikuni K."/>
        </authorList>
    </citation>
    <scope>NUCLEOTIDE SEQUENCE [MRNA]</scope>
    <source>
        <strain>Holstein</strain>
        <tissue>Skeletal muscle</tissue>
    </source>
</reference>
<sequence>MSDEEVEHVEEEYEEEEEAQEEAPPPPAEVPEVHEEVHEVHEPEEVQEEEKPRPRLTAPKIPEGEKVDFDDIQKKRQNKDLMELQALIDSHFEARKKEEEELVALKERIEKRRAERAEQQRIRAEKERERQNRLAEEKARREEEDAKRRAEDDLKKKKALSSMGANYSSYLAKADQKRGKKQTAREMKKKVLAERRKPLNIDHLSEDKLRDKAKELWDTLYQLETDKFEYGEKLKRQKYDITNLRSRIDQAQKHSKKAGTAPKGKVGGRWK</sequence>
<feature type="initiator methionine" description="Removed" evidence="2">
    <location>
        <position position="1"/>
    </location>
</feature>
<feature type="chain" id="PRO_0000345625" description="Troponin T, fast skeletal muscle">
    <location>
        <begin position="2"/>
        <end position="271"/>
    </location>
</feature>
<feature type="region of interest" description="Disordered" evidence="5">
    <location>
        <begin position="1"/>
        <end position="74"/>
    </location>
</feature>
<feature type="region of interest" description="Disordered" evidence="5">
    <location>
        <begin position="113"/>
        <end position="194"/>
    </location>
</feature>
<feature type="region of interest" description="Disordered" evidence="5">
    <location>
        <begin position="248"/>
        <end position="271"/>
    </location>
</feature>
<feature type="compositionally biased region" description="Acidic residues" evidence="5">
    <location>
        <begin position="1"/>
        <end position="21"/>
    </location>
</feature>
<feature type="compositionally biased region" description="Basic and acidic residues" evidence="5">
    <location>
        <begin position="31"/>
        <end position="53"/>
    </location>
</feature>
<feature type="compositionally biased region" description="Basic and acidic residues" evidence="5">
    <location>
        <begin position="62"/>
        <end position="74"/>
    </location>
</feature>
<feature type="compositionally biased region" description="Basic and acidic residues" evidence="5">
    <location>
        <begin position="113"/>
        <end position="155"/>
    </location>
</feature>
<feature type="compositionally biased region" description="Basic and acidic residues" evidence="5">
    <location>
        <begin position="183"/>
        <end position="194"/>
    </location>
</feature>
<feature type="modified residue" description="N-acetylserine" evidence="2">
    <location>
        <position position="2"/>
    </location>
</feature>
<feature type="modified residue" description="Phosphoserine" evidence="3">
    <location>
        <position position="2"/>
    </location>
</feature>
<feature type="modified residue" description="Phosphoserine" evidence="3">
    <location>
        <position position="90"/>
    </location>
</feature>
<feature type="modified residue" description="Phosphoserine" evidence="4">
    <location>
        <position position="161"/>
    </location>
</feature>
<feature type="modified residue" description="Phosphoserine" evidence="3">
    <location>
        <position position="168"/>
    </location>
</feature>
<feature type="modified residue" description="Phosphoserine" evidence="3">
    <location>
        <position position="169"/>
    </location>
</feature>
<feature type="modified residue" description="Phosphoserine" evidence="3">
    <location>
        <position position="205"/>
    </location>
</feature>
<feature type="modified residue" description="Phosphotyrosine" evidence="3">
    <location>
        <position position="221"/>
    </location>
</feature>